<evidence type="ECO:0000255" key="1">
    <source>
        <dbReference type="HAMAP-Rule" id="MF_01572"/>
    </source>
</evidence>
<reference key="1">
    <citation type="journal article" date="2008" name="J. Bacteriol.">
        <title>Genome sequence of Lactobacillus helveticus: an organism distinguished by selective gene loss and IS element expansion.</title>
        <authorList>
            <person name="Callanan M."/>
            <person name="Kaleta P."/>
            <person name="O'Callaghan J."/>
            <person name="O'Sullivan O."/>
            <person name="Jordan K."/>
            <person name="McAuliffe O."/>
            <person name="Sangrador-Vegas A."/>
            <person name="Slattery L."/>
            <person name="Fitzgerald G.F."/>
            <person name="Beresford T."/>
            <person name="Ross R.P."/>
        </authorList>
    </citation>
    <scope>NUCLEOTIDE SEQUENCE [LARGE SCALE GENOMIC DNA]</scope>
    <source>
        <strain>DPC 4571</strain>
    </source>
</reference>
<gene>
    <name type="ordered locus">lhv_0999</name>
</gene>
<feature type="chain" id="PRO_1000073600" description="UPF0397 protein lhv_0999">
    <location>
        <begin position="1"/>
        <end position="185"/>
    </location>
</feature>
<feature type="transmembrane region" description="Helical" evidence="1">
    <location>
        <begin position="11"/>
        <end position="31"/>
    </location>
</feature>
<feature type="transmembrane region" description="Helical" evidence="1">
    <location>
        <begin position="45"/>
        <end position="65"/>
    </location>
</feature>
<feature type="transmembrane region" description="Helical" evidence="1">
    <location>
        <begin position="72"/>
        <end position="92"/>
    </location>
</feature>
<feature type="transmembrane region" description="Helical" evidence="1">
    <location>
        <begin position="111"/>
        <end position="131"/>
    </location>
</feature>
<feature type="transmembrane region" description="Helical" evidence="1">
    <location>
        <begin position="145"/>
        <end position="165"/>
    </location>
</feature>
<dbReference type="EMBL" id="CP000517">
    <property type="protein sequence ID" value="ABX27077.1"/>
    <property type="molecule type" value="Genomic_DNA"/>
</dbReference>
<dbReference type="RefSeq" id="WP_012211780.1">
    <property type="nucleotide sequence ID" value="NC_010080.1"/>
</dbReference>
<dbReference type="SMR" id="A8YUY9"/>
<dbReference type="KEGG" id="lhe:lhv_0999"/>
<dbReference type="eggNOG" id="COG4720">
    <property type="taxonomic scope" value="Bacteria"/>
</dbReference>
<dbReference type="HOGENOM" id="CLU_120023_0_0_9"/>
<dbReference type="Proteomes" id="UP000000790">
    <property type="component" value="Chromosome"/>
</dbReference>
<dbReference type="GO" id="GO:0005886">
    <property type="term" value="C:plasma membrane"/>
    <property type="evidence" value="ECO:0007669"/>
    <property type="project" value="UniProtKB-SubCell"/>
</dbReference>
<dbReference type="Gene3D" id="1.10.1760.20">
    <property type="match status" value="1"/>
</dbReference>
<dbReference type="HAMAP" id="MF_01572">
    <property type="entry name" value="UPF0397"/>
    <property type="match status" value="1"/>
</dbReference>
<dbReference type="InterPro" id="IPR009825">
    <property type="entry name" value="ECF_substrate-spec-like"/>
</dbReference>
<dbReference type="InterPro" id="IPR022914">
    <property type="entry name" value="UPF0397"/>
</dbReference>
<dbReference type="NCBIfam" id="NF010182">
    <property type="entry name" value="PRK13661.1"/>
    <property type="match status" value="1"/>
</dbReference>
<dbReference type="PANTHER" id="PTHR37815">
    <property type="entry name" value="UPF0397 PROTEIN BC_2624-RELATED"/>
    <property type="match status" value="1"/>
</dbReference>
<dbReference type="PANTHER" id="PTHR37815:SF3">
    <property type="entry name" value="UPF0397 PROTEIN SPR0429"/>
    <property type="match status" value="1"/>
</dbReference>
<dbReference type="Pfam" id="PF07155">
    <property type="entry name" value="ECF-ribofla_trS"/>
    <property type="match status" value="1"/>
</dbReference>
<keyword id="KW-1003">Cell membrane</keyword>
<keyword id="KW-0472">Membrane</keyword>
<keyword id="KW-0812">Transmembrane</keyword>
<keyword id="KW-1133">Transmembrane helix</keyword>
<name>Y999_LACH4</name>
<accession>A8YUY9</accession>
<proteinExistence type="inferred from homology"/>
<organism>
    <name type="scientific">Lactobacillus helveticus (strain DPC 4571)</name>
    <dbReference type="NCBI Taxonomy" id="405566"/>
    <lineage>
        <taxon>Bacteria</taxon>
        <taxon>Bacillati</taxon>
        <taxon>Bacillota</taxon>
        <taxon>Bacilli</taxon>
        <taxon>Lactobacillales</taxon>
        <taxon>Lactobacillaceae</taxon>
        <taxon>Lactobacillus</taxon>
    </lineage>
</organism>
<sequence>MKKQDLSVKNVVAMGIGSAIYVILTRFTSIPTPIPNTNIELVFPFLALFAAIYGAKVGFAVGFIGHTLSDFIMYGQTWWSWVLATGVLGLIIGLASKKLDLKNGIFGIKQILLFNIVQIFANIIAWIVVAPIGDIIIYSEPANKVFVQGISATLSNGITILVVGTLLLKAYAGTKIKKGSLRKED</sequence>
<comment type="subcellular location">
    <subcellularLocation>
        <location evidence="1">Cell membrane</location>
        <topology evidence="1">Multi-pass membrane protein</topology>
    </subcellularLocation>
</comment>
<comment type="similarity">
    <text evidence="1">Belongs to the UPF0397 family.</text>
</comment>
<protein>
    <recommendedName>
        <fullName evidence="1">UPF0397 protein lhv_0999</fullName>
    </recommendedName>
</protein>